<protein>
    <recommendedName>
        <fullName evidence="1">Probable 2,3-bisphosphoglycerate-independent phosphoglycerate mutase</fullName>
        <shortName evidence="1">BPG-independent PGAM</shortName>
        <shortName evidence="1">Phosphoglyceromutase</shortName>
        <shortName evidence="1">aPGAM</shortName>
        <ecNumber evidence="1">5.4.2.12</ecNumber>
    </recommendedName>
</protein>
<proteinExistence type="inferred from homology"/>
<feature type="chain" id="PRO_1000068386" description="Probable 2,3-bisphosphoglycerate-independent phosphoglycerate mutase">
    <location>
        <begin position="1"/>
        <end position="401"/>
    </location>
</feature>
<accession>A5ILK6</accession>
<reference key="1">
    <citation type="submission" date="2007-05" db="EMBL/GenBank/DDBJ databases">
        <title>Complete sequence of Thermotoga petrophila RKU-1.</title>
        <authorList>
            <consortium name="US DOE Joint Genome Institute"/>
            <person name="Copeland A."/>
            <person name="Lucas S."/>
            <person name="Lapidus A."/>
            <person name="Barry K."/>
            <person name="Glavina del Rio T."/>
            <person name="Dalin E."/>
            <person name="Tice H."/>
            <person name="Pitluck S."/>
            <person name="Sims D."/>
            <person name="Brettin T."/>
            <person name="Bruce D."/>
            <person name="Detter J.C."/>
            <person name="Han C."/>
            <person name="Tapia R."/>
            <person name="Schmutz J."/>
            <person name="Larimer F."/>
            <person name="Land M."/>
            <person name="Hauser L."/>
            <person name="Kyrpides N."/>
            <person name="Mikhailova N."/>
            <person name="Nelson K."/>
            <person name="Gogarten J.P."/>
            <person name="Noll K."/>
            <person name="Richardson P."/>
        </authorList>
    </citation>
    <scope>NUCLEOTIDE SEQUENCE [LARGE SCALE GENOMIC DNA]</scope>
    <source>
        <strain>ATCC BAA-488 / DSM 13995 / JCM 10881 / RKU-1</strain>
    </source>
</reference>
<name>APGM_THEP1</name>
<gene>
    <name evidence="1" type="primary">apgM</name>
    <name type="ordered locus">Tpet_1062</name>
</gene>
<sequence>MFDKQEFVSKLVTEEKAKIVLLVMDGLGDIPVNGKTPLQAANTPNLDSLAKESDLGQTIPVLPGITPGSGPGHLSLFGYDPIRYQIGRGILEALGIGVEVGEKDVVARANFATWDGKVVLDRRAGRPATEESAKVVQLLSEKIKKIEDVEITFYPGKEHRFVVKFTGEGLGDNVTDADPQKEGHPMVWAEGLDEPSKKTARITNELIKKIAEVLKDNPKINFALIRGFSKYPDLPKFPQVYKMKAGAIATYPMYRGLAKLVGMEIIETGQTVADEIKTLKERWNDYDFFYVHVKKTDSYGEDGKFEEKVKVIEEVDALIPEIVSLNPDVLVITGDHSTPVPLKAHSWHPVPLLIWSKYTRRGLSQAFNEFECARGTLGTIHASDVMTLALAYAGKLEKFGA</sequence>
<comment type="function">
    <text evidence="1">Catalyzes the interconversion of 2-phosphoglycerate and 3-phosphoglycerate.</text>
</comment>
<comment type="catalytic activity">
    <reaction evidence="1">
        <text>(2R)-2-phosphoglycerate = (2R)-3-phosphoglycerate</text>
        <dbReference type="Rhea" id="RHEA:15901"/>
        <dbReference type="ChEBI" id="CHEBI:58272"/>
        <dbReference type="ChEBI" id="CHEBI:58289"/>
        <dbReference type="EC" id="5.4.2.12"/>
    </reaction>
</comment>
<comment type="pathway">
    <text evidence="1">Carbohydrate degradation; glycolysis; pyruvate from D-glyceraldehyde 3-phosphate: step 3/5.</text>
</comment>
<comment type="similarity">
    <text evidence="1">Belongs to the BPG-independent phosphoglycerate mutase family. A-PGAM subfamily.</text>
</comment>
<organism>
    <name type="scientific">Thermotoga petrophila (strain ATCC BAA-488 / DSM 13995 / JCM 10881 / RKU-1)</name>
    <dbReference type="NCBI Taxonomy" id="390874"/>
    <lineage>
        <taxon>Bacteria</taxon>
        <taxon>Thermotogati</taxon>
        <taxon>Thermotogota</taxon>
        <taxon>Thermotogae</taxon>
        <taxon>Thermotogales</taxon>
        <taxon>Thermotogaceae</taxon>
        <taxon>Thermotoga</taxon>
    </lineage>
</organism>
<keyword id="KW-0324">Glycolysis</keyword>
<keyword id="KW-0413">Isomerase</keyword>
<dbReference type="EC" id="5.4.2.12" evidence="1"/>
<dbReference type="EMBL" id="CP000702">
    <property type="protein sequence ID" value="ABQ47079.1"/>
    <property type="molecule type" value="Genomic_DNA"/>
</dbReference>
<dbReference type="RefSeq" id="WP_011943607.1">
    <property type="nucleotide sequence ID" value="NC_009486.1"/>
</dbReference>
<dbReference type="SMR" id="A5ILK6"/>
<dbReference type="STRING" id="390874.Tpet_1062"/>
<dbReference type="KEGG" id="tpt:Tpet_1062"/>
<dbReference type="eggNOG" id="COG3635">
    <property type="taxonomic scope" value="Bacteria"/>
</dbReference>
<dbReference type="HOGENOM" id="CLU_034906_2_0_0"/>
<dbReference type="UniPathway" id="UPA00109">
    <property type="reaction ID" value="UER00186"/>
</dbReference>
<dbReference type="Proteomes" id="UP000006558">
    <property type="component" value="Chromosome"/>
</dbReference>
<dbReference type="GO" id="GO:0046872">
    <property type="term" value="F:metal ion binding"/>
    <property type="evidence" value="ECO:0007669"/>
    <property type="project" value="InterPro"/>
</dbReference>
<dbReference type="GO" id="GO:0004619">
    <property type="term" value="F:phosphoglycerate mutase activity"/>
    <property type="evidence" value="ECO:0007669"/>
    <property type="project" value="UniProtKB-EC"/>
</dbReference>
<dbReference type="GO" id="GO:0006096">
    <property type="term" value="P:glycolytic process"/>
    <property type="evidence" value="ECO:0007669"/>
    <property type="project" value="UniProtKB-UniRule"/>
</dbReference>
<dbReference type="CDD" id="cd16011">
    <property type="entry name" value="iPGM_like"/>
    <property type="match status" value="1"/>
</dbReference>
<dbReference type="Gene3D" id="3.40.720.10">
    <property type="entry name" value="Alkaline Phosphatase, subunit A"/>
    <property type="match status" value="2"/>
</dbReference>
<dbReference type="HAMAP" id="MF_01402_B">
    <property type="entry name" value="ApgM_B"/>
    <property type="match status" value="1"/>
</dbReference>
<dbReference type="InterPro" id="IPR017850">
    <property type="entry name" value="Alkaline_phosphatase_core_sf"/>
</dbReference>
<dbReference type="InterPro" id="IPR023665">
    <property type="entry name" value="ApgAM_prokaryotes"/>
</dbReference>
<dbReference type="InterPro" id="IPR006124">
    <property type="entry name" value="Metalloenzyme"/>
</dbReference>
<dbReference type="InterPro" id="IPR004456">
    <property type="entry name" value="Pglycerate_mutase_ApgM"/>
</dbReference>
<dbReference type="NCBIfam" id="TIGR00306">
    <property type="entry name" value="apgM"/>
    <property type="match status" value="1"/>
</dbReference>
<dbReference type="NCBIfam" id="NF003160">
    <property type="entry name" value="PRK04135.1"/>
    <property type="match status" value="1"/>
</dbReference>
<dbReference type="PANTHER" id="PTHR31209">
    <property type="entry name" value="COFACTOR-INDEPENDENT PHOSPHOGLYCERATE MUTASE"/>
    <property type="match status" value="1"/>
</dbReference>
<dbReference type="PANTHER" id="PTHR31209:SF0">
    <property type="entry name" value="METALLOENZYME DOMAIN-CONTAINING PROTEIN"/>
    <property type="match status" value="1"/>
</dbReference>
<dbReference type="Pfam" id="PF01676">
    <property type="entry name" value="Metalloenzyme"/>
    <property type="match status" value="1"/>
</dbReference>
<dbReference type="Pfam" id="PF10143">
    <property type="entry name" value="PhosphMutase"/>
    <property type="match status" value="1"/>
</dbReference>
<dbReference type="PIRSF" id="PIRSF006392">
    <property type="entry name" value="IPGAM_arch"/>
    <property type="match status" value="1"/>
</dbReference>
<dbReference type="SUPFAM" id="SSF53649">
    <property type="entry name" value="Alkaline phosphatase-like"/>
    <property type="match status" value="1"/>
</dbReference>
<evidence type="ECO:0000255" key="1">
    <source>
        <dbReference type="HAMAP-Rule" id="MF_01402"/>
    </source>
</evidence>